<organism>
    <name type="scientific">Klebsiella pneumoniae</name>
    <dbReference type="NCBI Taxonomy" id="573"/>
    <lineage>
        <taxon>Bacteria</taxon>
        <taxon>Pseudomonadati</taxon>
        <taxon>Pseudomonadota</taxon>
        <taxon>Gammaproteobacteria</taxon>
        <taxon>Enterobacterales</taxon>
        <taxon>Enterobacteriaceae</taxon>
        <taxon>Klebsiella/Raoultella group</taxon>
        <taxon>Klebsiella</taxon>
        <taxon>Klebsiella pneumoniae complex</taxon>
    </lineage>
</organism>
<sequence>MTQLTCFKAYDIRGELGEELNEDIAYRIGRAYGEFLKPGKIVVGGDVRLTSESLNVALARGLMDAGTDVLDIGLSGTEEIYFATFHLGVDGGIEVTASHNPMNYNGMKLVRENAKPISGDTGLRDIQRLAEENQFPPVDPARRGTLRQISVLKEYVD</sequence>
<proteinExistence type="inferred from homology"/>
<keyword id="KW-0972">Capsule biogenesis/degradation</keyword>
<keyword id="KW-0413">Isomerase</keyword>
<keyword id="KW-0448">Lipopolysaccharide biosynthesis</keyword>
<keyword id="KW-0460">Magnesium</keyword>
<keyword id="KW-0479">Metal-binding</keyword>
<keyword id="KW-0597">Phosphoprotein</keyword>
<accession>Q48463</accession>
<comment type="function">
    <text>Involved in the biosynthesis of the K2 capsular polysaccharide biosynthesis.</text>
</comment>
<comment type="catalytic activity">
    <reaction>
        <text>alpha-D-mannose 1-phosphate = D-mannose 6-phosphate</text>
        <dbReference type="Rhea" id="RHEA:11140"/>
        <dbReference type="ChEBI" id="CHEBI:58409"/>
        <dbReference type="ChEBI" id="CHEBI:58735"/>
        <dbReference type="EC" id="5.4.2.8"/>
    </reaction>
</comment>
<comment type="cofactor">
    <cofactor evidence="1">
        <name>Mg(2+)</name>
        <dbReference type="ChEBI" id="CHEBI:18420"/>
    </cofactor>
    <text evidence="1">Binds 1 Mg(2+) ion per subunit.</text>
</comment>
<comment type="pathway">
    <text>Nucleotide-sugar biosynthesis; GDP-alpha-D-mannose biosynthesis; alpha-D-mannose 1-phosphate from D-fructose 6-phosphate: step 2/2.</text>
</comment>
<comment type="pathway">
    <text>Capsule biogenesis; capsule polysaccharide biosynthesis.</text>
</comment>
<comment type="similarity">
    <text evidence="2">Belongs to the phosphohexose mutase family.</text>
</comment>
<reference key="1">
    <citation type="journal article" date="1995" name="J. Bacteriol.">
        <title>Genomic organization of the Klebsiella pneumoniae cps region responsible for serotype K2 capsular polysaccharide synthesis in the virulent strain Chedid.</title>
        <authorList>
            <person name="Arakawa Y."/>
            <person name="Wacharotayankun R."/>
            <person name="Nagatsuka T."/>
            <person name="Ito H."/>
            <person name="Kato N."/>
            <person name="Ohta M."/>
        </authorList>
    </citation>
    <scope>NUCLEOTIDE SEQUENCE [GENOMIC DNA]</scope>
    <source>
        <strain>Chedid</strain>
    </source>
</reference>
<dbReference type="EC" id="5.4.2.8"/>
<dbReference type="EMBL" id="D21242">
    <property type="protein sequence ID" value="BAA04788.1"/>
    <property type="molecule type" value="Genomic_DNA"/>
</dbReference>
<dbReference type="PIR" id="F56146">
    <property type="entry name" value="F56146"/>
</dbReference>
<dbReference type="SMR" id="Q48463"/>
<dbReference type="UniPathway" id="UPA00126">
    <property type="reaction ID" value="UER00424"/>
</dbReference>
<dbReference type="UniPathway" id="UPA00934"/>
<dbReference type="GO" id="GO:0000287">
    <property type="term" value="F:magnesium ion binding"/>
    <property type="evidence" value="ECO:0007669"/>
    <property type="project" value="InterPro"/>
</dbReference>
<dbReference type="GO" id="GO:0004615">
    <property type="term" value="F:phosphomannomutase activity"/>
    <property type="evidence" value="ECO:0007669"/>
    <property type="project" value="UniProtKB-EC"/>
</dbReference>
<dbReference type="GO" id="GO:0045227">
    <property type="term" value="P:capsule polysaccharide biosynthetic process"/>
    <property type="evidence" value="ECO:0007669"/>
    <property type="project" value="UniProtKB-UniPathway"/>
</dbReference>
<dbReference type="GO" id="GO:0009298">
    <property type="term" value="P:GDP-mannose biosynthetic process"/>
    <property type="evidence" value="ECO:0007669"/>
    <property type="project" value="UniProtKB-UniPathway"/>
</dbReference>
<dbReference type="GO" id="GO:0009103">
    <property type="term" value="P:lipopolysaccharide biosynthetic process"/>
    <property type="evidence" value="ECO:0007669"/>
    <property type="project" value="UniProtKB-KW"/>
</dbReference>
<dbReference type="Gene3D" id="3.40.120.10">
    <property type="entry name" value="Alpha-D-Glucose-1,6-Bisphosphate, subunit A, domain 3"/>
    <property type="match status" value="1"/>
</dbReference>
<dbReference type="InterPro" id="IPR005844">
    <property type="entry name" value="A-D-PHexomutase_a/b/a-I"/>
</dbReference>
<dbReference type="InterPro" id="IPR016055">
    <property type="entry name" value="A-D-PHexomutase_a/b/a-I/II/III"/>
</dbReference>
<dbReference type="InterPro" id="IPR016066">
    <property type="entry name" value="A-D-PHexomutase_CS"/>
</dbReference>
<dbReference type="PANTHER" id="PTHR43771">
    <property type="entry name" value="PHOSPHOMANNOMUTASE"/>
    <property type="match status" value="1"/>
</dbReference>
<dbReference type="PANTHER" id="PTHR43771:SF1">
    <property type="entry name" value="PHOSPHOMANNOMUTASE"/>
    <property type="match status" value="1"/>
</dbReference>
<dbReference type="Pfam" id="PF02878">
    <property type="entry name" value="PGM_PMM_I"/>
    <property type="match status" value="1"/>
</dbReference>
<dbReference type="SUPFAM" id="SSF53738">
    <property type="entry name" value="Phosphoglucomutase, first 3 domains"/>
    <property type="match status" value="1"/>
</dbReference>
<dbReference type="PROSITE" id="PS00710">
    <property type="entry name" value="PGM_PMM"/>
    <property type="match status" value="1"/>
</dbReference>
<feature type="chain" id="PRO_0000147820" description="Phosphomannomutase">
    <location>
        <begin position="1"/>
        <end position="157" status="greater than"/>
    </location>
</feature>
<feature type="active site" description="Phosphoserine intermediate" evidence="1">
    <location>
        <position position="98"/>
    </location>
</feature>
<feature type="binding site" description="via phosphate group" evidence="1">
    <location>
        <position position="98"/>
    </location>
    <ligand>
        <name>Mg(2+)</name>
        <dbReference type="ChEBI" id="CHEBI:18420"/>
    </ligand>
</feature>
<feature type="non-terminal residue">
    <location>
        <position position="157"/>
    </location>
</feature>
<evidence type="ECO:0000250" key="1"/>
<evidence type="ECO:0000305" key="2"/>
<protein>
    <recommendedName>
        <fullName>Phosphomannomutase</fullName>
        <shortName>PMM</shortName>
        <ecNumber>5.4.2.8</ecNumber>
    </recommendedName>
    <alternativeName>
        <fullName>ORF17</fullName>
    </alternativeName>
</protein>
<name>MANB_KLEPN</name>
<gene>
    <name type="primary">manB</name>
    <name type="synonym">cpsG</name>
</gene>